<accession>E2R5I0</accession>
<dbReference type="EMBL" id="AAEX02020466">
    <property type="status" value="NOT_ANNOTATED_CDS"/>
    <property type="molecule type" value="Genomic_DNA"/>
</dbReference>
<dbReference type="RefSeq" id="NP_001300814.1">
    <property type="nucleotide sequence ID" value="NM_001313885.2"/>
</dbReference>
<dbReference type="RefSeq" id="XP_005629026.1">
    <property type="nucleotide sequence ID" value="XM_005628969.2"/>
</dbReference>
<dbReference type="RefSeq" id="XP_005629027.1">
    <property type="nucleotide sequence ID" value="XM_005628970.2"/>
</dbReference>
<dbReference type="RefSeq" id="XP_013974697.1">
    <property type="nucleotide sequence ID" value="XM_014119222.1"/>
</dbReference>
<dbReference type="RefSeq" id="XP_038543077.1">
    <property type="nucleotide sequence ID" value="XM_038687149.1"/>
</dbReference>
<dbReference type="RefSeq" id="XP_038543078.1">
    <property type="nucleotide sequence ID" value="XM_038687150.1"/>
</dbReference>
<dbReference type="RefSeq" id="XP_038543079.1">
    <property type="nucleotide sequence ID" value="XM_038687151.1"/>
</dbReference>
<dbReference type="SMR" id="E2R5I0"/>
<dbReference type="FunCoup" id="E2R5I0">
    <property type="interactions" value="589"/>
</dbReference>
<dbReference type="STRING" id="9615.ENSCAFP00000049095"/>
<dbReference type="PaxDb" id="9612-ENSCAFP00000005368"/>
<dbReference type="Ensembl" id="ENSCAFT00000085864.2">
    <property type="protein sequence ID" value="ENSCAFP00000049095.2"/>
    <property type="gene ID" value="ENSCAFG00000046486.2"/>
</dbReference>
<dbReference type="Ensembl" id="ENSCAFT00040016138.1">
    <property type="protein sequence ID" value="ENSCAFP00040013976.1"/>
    <property type="gene ID" value="ENSCAFG00040008661.1"/>
</dbReference>
<dbReference type="Ensembl" id="ENSCAFT00845027453.1">
    <property type="protein sequence ID" value="ENSCAFP00845021599.1"/>
    <property type="gene ID" value="ENSCAFG00845015395.1"/>
</dbReference>
<dbReference type="GeneID" id="100682960"/>
<dbReference type="KEGG" id="cfa:100682960"/>
<dbReference type="CTD" id="113444"/>
<dbReference type="VEuPathDB" id="HostDB:ENSCAFG00845015395"/>
<dbReference type="VGNC" id="VGNC:54268">
    <property type="gene designation" value="SMIM12"/>
</dbReference>
<dbReference type="eggNOG" id="ENOG502S2AD">
    <property type="taxonomic scope" value="Eukaryota"/>
</dbReference>
<dbReference type="GeneTree" id="ENSGT00390000009435"/>
<dbReference type="InParanoid" id="E2R5I0"/>
<dbReference type="OrthoDB" id="10052506at2759"/>
<dbReference type="Proteomes" id="UP000002254">
    <property type="component" value="Chromosome 15"/>
</dbReference>
<dbReference type="Proteomes" id="UP000694429">
    <property type="component" value="Unplaced"/>
</dbReference>
<dbReference type="Proteomes" id="UP000694542">
    <property type="component" value="Chromosome 15"/>
</dbReference>
<dbReference type="Proteomes" id="UP000805418">
    <property type="component" value="Chromosome 15"/>
</dbReference>
<dbReference type="GO" id="GO:0016020">
    <property type="term" value="C:membrane"/>
    <property type="evidence" value="ECO:0007669"/>
    <property type="project" value="UniProtKB-SubCell"/>
</dbReference>
<dbReference type="InterPro" id="IPR031933">
    <property type="entry name" value="UPF0767"/>
</dbReference>
<dbReference type="PANTHER" id="PTHR28599">
    <property type="entry name" value="SMALL INTEGRAL MEMBRANE PROTEIN 12"/>
    <property type="match status" value="1"/>
</dbReference>
<dbReference type="PANTHER" id="PTHR28599:SF1">
    <property type="entry name" value="SMALL INTEGRAL MEMBRANE PROTEIN 12"/>
    <property type="match status" value="1"/>
</dbReference>
<dbReference type="Pfam" id="PF15990">
    <property type="entry name" value="UPF0767"/>
    <property type="match status" value="1"/>
</dbReference>
<sequence>MWPVLWTVVRTYAPYVTFPVAFVVGAVGYHLEWFIRGKDPQPAEEEKSISERREDRKLDELLGKDHTQVVSLKDKLEFAPKAVLNRNRPEKN</sequence>
<keyword id="KW-0472">Membrane</keyword>
<keyword id="KW-1185">Reference proteome</keyword>
<keyword id="KW-0812">Transmembrane</keyword>
<keyword id="KW-1133">Transmembrane helix</keyword>
<proteinExistence type="inferred from homology"/>
<name>SIM12_CANLF</name>
<comment type="subcellular location">
    <subcellularLocation>
        <location evidence="2">Membrane</location>
        <topology evidence="2">Single-pass membrane protein</topology>
    </subcellularLocation>
</comment>
<comment type="similarity">
    <text evidence="2">Belongs to the SMIM12 family.</text>
</comment>
<organism>
    <name type="scientific">Canis lupus familiaris</name>
    <name type="common">Dog</name>
    <name type="synonym">Canis familiaris</name>
    <dbReference type="NCBI Taxonomy" id="9615"/>
    <lineage>
        <taxon>Eukaryota</taxon>
        <taxon>Metazoa</taxon>
        <taxon>Chordata</taxon>
        <taxon>Craniata</taxon>
        <taxon>Vertebrata</taxon>
        <taxon>Euteleostomi</taxon>
        <taxon>Mammalia</taxon>
        <taxon>Eutheria</taxon>
        <taxon>Laurasiatheria</taxon>
        <taxon>Carnivora</taxon>
        <taxon>Caniformia</taxon>
        <taxon>Canidae</taxon>
        <taxon>Canis</taxon>
    </lineage>
</organism>
<reference key="1">
    <citation type="journal article" date="2005" name="Nature">
        <title>Genome sequence, comparative analysis and haplotype structure of the domestic dog.</title>
        <authorList>
            <person name="Lindblad-Toh K."/>
            <person name="Wade C.M."/>
            <person name="Mikkelsen T.S."/>
            <person name="Karlsson E.K."/>
            <person name="Jaffe D.B."/>
            <person name="Kamal M."/>
            <person name="Clamp M."/>
            <person name="Chang J.L."/>
            <person name="Kulbokas E.J. III"/>
            <person name="Zody M.C."/>
            <person name="Mauceli E."/>
            <person name="Xie X."/>
            <person name="Breen M."/>
            <person name="Wayne R.K."/>
            <person name="Ostrander E.A."/>
            <person name="Ponting C.P."/>
            <person name="Galibert F."/>
            <person name="Smith D.R."/>
            <person name="deJong P.J."/>
            <person name="Kirkness E.F."/>
            <person name="Alvarez P."/>
            <person name="Biagi T."/>
            <person name="Brockman W."/>
            <person name="Butler J."/>
            <person name="Chin C.-W."/>
            <person name="Cook A."/>
            <person name="Cuff J."/>
            <person name="Daly M.J."/>
            <person name="DeCaprio D."/>
            <person name="Gnerre S."/>
            <person name="Grabherr M."/>
            <person name="Kellis M."/>
            <person name="Kleber M."/>
            <person name="Bardeleben C."/>
            <person name="Goodstadt L."/>
            <person name="Heger A."/>
            <person name="Hitte C."/>
            <person name="Kim L."/>
            <person name="Koepfli K.-P."/>
            <person name="Parker H.G."/>
            <person name="Pollinger J.P."/>
            <person name="Searle S.M.J."/>
            <person name="Sutter N.B."/>
            <person name="Thomas R."/>
            <person name="Webber C."/>
            <person name="Baldwin J."/>
            <person name="Abebe A."/>
            <person name="Abouelleil A."/>
            <person name="Aftuck L."/>
            <person name="Ait-Zahra M."/>
            <person name="Aldredge T."/>
            <person name="Allen N."/>
            <person name="An P."/>
            <person name="Anderson S."/>
            <person name="Antoine C."/>
            <person name="Arachchi H."/>
            <person name="Aslam A."/>
            <person name="Ayotte L."/>
            <person name="Bachantsang P."/>
            <person name="Barry A."/>
            <person name="Bayul T."/>
            <person name="Benamara M."/>
            <person name="Berlin A."/>
            <person name="Bessette D."/>
            <person name="Blitshteyn B."/>
            <person name="Bloom T."/>
            <person name="Blye J."/>
            <person name="Boguslavskiy L."/>
            <person name="Bonnet C."/>
            <person name="Boukhgalter B."/>
            <person name="Brown A."/>
            <person name="Cahill P."/>
            <person name="Calixte N."/>
            <person name="Camarata J."/>
            <person name="Cheshatsang Y."/>
            <person name="Chu J."/>
            <person name="Citroen M."/>
            <person name="Collymore A."/>
            <person name="Cooke P."/>
            <person name="Dawoe T."/>
            <person name="Daza R."/>
            <person name="Decktor K."/>
            <person name="DeGray S."/>
            <person name="Dhargay N."/>
            <person name="Dooley K."/>
            <person name="Dooley K."/>
            <person name="Dorje P."/>
            <person name="Dorjee K."/>
            <person name="Dorris L."/>
            <person name="Duffey N."/>
            <person name="Dupes A."/>
            <person name="Egbiremolen O."/>
            <person name="Elong R."/>
            <person name="Falk J."/>
            <person name="Farina A."/>
            <person name="Faro S."/>
            <person name="Ferguson D."/>
            <person name="Ferreira P."/>
            <person name="Fisher S."/>
            <person name="FitzGerald M."/>
            <person name="Foley K."/>
            <person name="Foley C."/>
            <person name="Franke A."/>
            <person name="Friedrich D."/>
            <person name="Gage D."/>
            <person name="Garber M."/>
            <person name="Gearin G."/>
            <person name="Giannoukos G."/>
            <person name="Goode T."/>
            <person name="Goyette A."/>
            <person name="Graham J."/>
            <person name="Grandbois E."/>
            <person name="Gyaltsen K."/>
            <person name="Hafez N."/>
            <person name="Hagopian D."/>
            <person name="Hagos B."/>
            <person name="Hall J."/>
            <person name="Healy C."/>
            <person name="Hegarty R."/>
            <person name="Honan T."/>
            <person name="Horn A."/>
            <person name="Houde N."/>
            <person name="Hughes L."/>
            <person name="Hunnicutt L."/>
            <person name="Husby M."/>
            <person name="Jester B."/>
            <person name="Jones C."/>
            <person name="Kamat A."/>
            <person name="Kanga B."/>
            <person name="Kells C."/>
            <person name="Khazanovich D."/>
            <person name="Kieu A.C."/>
            <person name="Kisner P."/>
            <person name="Kumar M."/>
            <person name="Lance K."/>
            <person name="Landers T."/>
            <person name="Lara M."/>
            <person name="Lee W."/>
            <person name="Leger J.-P."/>
            <person name="Lennon N."/>
            <person name="Leuper L."/>
            <person name="LeVine S."/>
            <person name="Liu J."/>
            <person name="Liu X."/>
            <person name="Lokyitsang Y."/>
            <person name="Lokyitsang T."/>
            <person name="Lui A."/>
            <person name="Macdonald J."/>
            <person name="Major J."/>
            <person name="Marabella R."/>
            <person name="Maru K."/>
            <person name="Matthews C."/>
            <person name="McDonough S."/>
            <person name="Mehta T."/>
            <person name="Meldrim J."/>
            <person name="Melnikov A."/>
            <person name="Meneus L."/>
            <person name="Mihalev A."/>
            <person name="Mihova T."/>
            <person name="Miller K."/>
            <person name="Mittelman R."/>
            <person name="Mlenga V."/>
            <person name="Mulrain L."/>
            <person name="Munson G."/>
            <person name="Navidi A."/>
            <person name="Naylor J."/>
            <person name="Nguyen T."/>
            <person name="Nguyen N."/>
            <person name="Nguyen C."/>
            <person name="Nguyen T."/>
            <person name="Nicol R."/>
            <person name="Norbu N."/>
            <person name="Norbu C."/>
            <person name="Novod N."/>
            <person name="Nyima T."/>
            <person name="Olandt P."/>
            <person name="O'Neill B."/>
            <person name="O'Neill K."/>
            <person name="Osman S."/>
            <person name="Oyono L."/>
            <person name="Patti C."/>
            <person name="Perrin D."/>
            <person name="Phunkhang P."/>
            <person name="Pierre F."/>
            <person name="Priest M."/>
            <person name="Rachupka A."/>
            <person name="Raghuraman S."/>
            <person name="Rameau R."/>
            <person name="Ray V."/>
            <person name="Raymond C."/>
            <person name="Rege F."/>
            <person name="Rise C."/>
            <person name="Rogers J."/>
            <person name="Rogov P."/>
            <person name="Sahalie J."/>
            <person name="Settipalli S."/>
            <person name="Sharpe T."/>
            <person name="Shea T."/>
            <person name="Sheehan M."/>
            <person name="Sherpa N."/>
            <person name="Shi J."/>
            <person name="Shih D."/>
            <person name="Sloan J."/>
            <person name="Smith C."/>
            <person name="Sparrow T."/>
            <person name="Stalker J."/>
            <person name="Stange-Thomann N."/>
            <person name="Stavropoulos S."/>
            <person name="Stone C."/>
            <person name="Stone S."/>
            <person name="Sykes S."/>
            <person name="Tchuinga P."/>
            <person name="Tenzing P."/>
            <person name="Tesfaye S."/>
            <person name="Thoulutsang D."/>
            <person name="Thoulutsang Y."/>
            <person name="Topham K."/>
            <person name="Topping I."/>
            <person name="Tsamla T."/>
            <person name="Vassiliev H."/>
            <person name="Venkataraman V."/>
            <person name="Vo A."/>
            <person name="Wangchuk T."/>
            <person name="Wangdi T."/>
            <person name="Weiand M."/>
            <person name="Wilkinson J."/>
            <person name="Wilson A."/>
            <person name="Yadav S."/>
            <person name="Yang S."/>
            <person name="Yang X."/>
            <person name="Young G."/>
            <person name="Yu Q."/>
            <person name="Zainoun J."/>
            <person name="Zembek L."/>
            <person name="Zimmer A."/>
            <person name="Lander E.S."/>
        </authorList>
    </citation>
    <scope>NUCLEOTIDE SEQUENCE [LARGE SCALE GENOMIC DNA]</scope>
    <source>
        <strain>Boxer</strain>
    </source>
</reference>
<feature type="chain" id="PRO_0000414318" description="Small integral membrane protein 12">
    <location>
        <begin position="1"/>
        <end position="92"/>
    </location>
</feature>
<feature type="transmembrane region" description="Helical" evidence="1">
    <location>
        <begin position="15"/>
        <end position="34"/>
    </location>
</feature>
<evidence type="ECO:0000255" key="1"/>
<evidence type="ECO:0000305" key="2"/>
<protein>
    <recommendedName>
        <fullName>Small integral membrane protein 12</fullName>
    </recommendedName>
</protein>
<gene>
    <name type="primary">SMIM12</name>
</gene>